<reference key="1">
    <citation type="journal article" date="2010" name="J. Bacteriol.">
        <title>Genome sequence of the Fleming strain of Micrococcus luteus, a simple free-living actinobacterium.</title>
        <authorList>
            <person name="Young M."/>
            <person name="Artsatbanov V."/>
            <person name="Beller H.R."/>
            <person name="Chandra G."/>
            <person name="Chater K.F."/>
            <person name="Dover L.G."/>
            <person name="Goh E.B."/>
            <person name="Kahan T."/>
            <person name="Kaprelyants A.S."/>
            <person name="Kyrpides N."/>
            <person name="Lapidus A."/>
            <person name="Lowry S.R."/>
            <person name="Lykidis A."/>
            <person name="Mahillon J."/>
            <person name="Markowitz V."/>
            <person name="Mavromatis K."/>
            <person name="Mukamolova G.V."/>
            <person name="Oren A."/>
            <person name="Rokem J.S."/>
            <person name="Smith M.C."/>
            <person name="Young D.I."/>
            <person name="Greenblatt C.L."/>
        </authorList>
    </citation>
    <scope>NUCLEOTIDE SEQUENCE [LARGE SCALE GENOMIC DNA]</scope>
    <source>
        <strain>ATCC 4698 / DSM 20030 / JCM 1464 / CCM 169 / CCUG 5858 / IAM 1056 / NBRC 3333 / NCIMB 9278 / NCTC 2665 / VKM Ac-2230</strain>
    </source>
</reference>
<evidence type="ECO:0000255" key="1">
    <source>
        <dbReference type="HAMAP-Rule" id="MF_00123"/>
    </source>
</evidence>
<feature type="chain" id="PRO_1000203100" description="Arginine--tRNA ligase">
    <location>
        <begin position="1"/>
        <end position="556"/>
    </location>
</feature>
<feature type="short sequence motif" description="'HIGH' region">
    <location>
        <begin position="134"/>
        <end position="144"/>
    </location>
</feature>
<protein>
    <recommendedName>
        <fullName evidence="1">Arginine--tRNA ligase</fullName>
        <ecNumber evidence="1">6.1.1.19</ecNumber>
    </recommendedName>
    <alternativeName>
        <fullName evidence="1">Arginyl-tRNA synthetase</fullName>
        <shortName evidence="1">ArgRS</shortName>
    </alternativeName>
</protein>
<keyword id="KW-0030">Aminoacyl-tRNA synthetase</keyword>
<keyword id="KW-0067">ATP-binding</keyword>
<keyword id="KW-0963">Cytoplasm</keyword>
<keyword id="KW-0436">Ligase</keyword>
<keyword id="KW-0547">Nucleotide-binding</keyword>
<keyword id="KW-0648">Protein biosynthesis</keyword>
<keyword id="KW-1185">Reference proteome</keyword>
<name>SYR_MICLC</name>
<proteinExistence type="inferred from homology"/>
<organism>
    <name type="scientific">Micrococcus luteus (strain ATCC 4698 / DSM 20030 / JCM 1464 / CCM 169 / CCUG 5858 / IAM 1056 / NBRC 3333 / NCIMB 9278 / NCTC 2665 / VKM Ac-2230)</name>
    <name type="common">Micrococcus lysodeikticus</name>
    <dbReference type="NCBI Taxonomy" id="465515"/>
    <lineage>
        <taxon>Bacteria</taxon>
        <taxon>Bacillati</taxon>
        <taxon>Actinomycetota</taxon>
        <taxon>Actinomycetes</taxon>
        <taxon>Micrococcales</taxon>
        <taxon>Micrococcaceae</taxon>
        <taxon>Micrococcus</taxon>
    </lineage>
</organism>
<sequence>MKPEDLSALLSAVLTDAVDAGDLPAALREGITPARVKVERPRSREHGDWATNVALQLGKKAGMAPRDLAGLVAERLTGKPGIAAVDVAGPGFLNVTLDAASAGALAREIVEAGPEYGRNDTLAGHTVNMEFVSANPTGPLHIGHTRWAALGDAIARLLRASGADVTAEYYVNDAGNQMNVFADSVLARLHGRDVPAGGYPGAYVQELADAVALEHPDVRELTDEAARPVVREAAYRLQMQDIKDTLAAFDVHFDVFTSEQTLHDSGAIDQAVQRLREQGHIEDREGAVWLKTTDFGDDKDRVLIRANGEPTYFAADAAYYLHKRDRGFEEKVYLLGADHHGYVNRLKAIAAAAGDDPATNIEILIGQLISVNGAKLSKRAGNIIELKDLVEWLGRDALRYDLARYPADSPLTIDPELLRSATNDNPVYYVQYAHARASGAARTAQAHGVDRSEFDAALLTHATESELLAQLAEFPAVVAAAARLREPHRVTRHLEVIAGAYHSWYAACRIVPMPTDDGTPRPVETLNRTRLWLNDATAQVLANGLGLLGVSAPEKM</sequence>
<comment type="catalytic activity">
    <reaction evidence="1">
        <text>tRNA(Arg) + L-arginine + ATP = L-arginyl-tRNA(Arg) + AMP + diphosphate</text>
        <dbReference type="Rhea" id="RHEA:20301"/>
        <dbReference type="Rhea" id="RHEA-COMP:9658"/>
        <dbReference type="Rhea" id="RHEA-COMP:9673"/>
        <dbReference type="ChEBI" id="CHEBI:30616"/>
        <dbReference type="ChEBI" id="CHEBI:32682"/>
        <dbReference type="ChEBI" id="CHEBI:33019"/>
        <dbReference type="ChEBI" id="CHEBI:78442"/>
        <dbReference type="ChEBI" id="CHEBI:78513"/>
        <dbReference type="ChEBI" id="CHEBI:456215"/>
        <dbReference type="EC" id="6.1.1.19"/>
    </reaction>
</comment>
<comment type="subunit">
    <text evidence="1">Monomer.</text>
</comment>
<comment type="subcellular location">
    <subcellularLocation>
        <location evidence="1">Cytoplasm</location>
    </subcellularLocation>
</comment>
<comment type="similarity">
    <text evidence="1">Belongs to the class-I aminoacyl-tRNA synthetase family.</text>
</comment>
<accession>C5CA60</accession>
<dbReference type="EC" id="6.1.1.19" evidence="1"/>
<dbReference type="EMBL" id="CP001628">
    <property type="protein sequence ID" value="ACS30329.1"/>
    <property type="molecule type" value="Genomic_DNA"/>
</dbReference>
<dbReference type="RefSeq" id="WP_010079032.1">
    <property type="nucleotide sequence ID" value="NC_012803.1"/>
</dbReference>
<dbReference type="SMR" id="C5CA60"/>
<dbReference type="STRING" id="465515.Mlut_08000"/>
<dbReference type="EnsemblBacteria" id="ACS30329">
    <property type="protein sequence ID" value="ACS30329"/>
    <property type="gene ID" value="Mlut_08000"/>
</dbReference>
<dbReference type="GeneID" id="93344963"/>
<dbReference type="KEGG" id="mlu:Mlut_08000"/>
<dbReference type="PATRIC" id="fig|465515.4.peg.763"/>
<dbReference type="eggNOG" id="COG0018">
    <property type="taxonomic scope" value="Bacteria"/>
</dbReference>
<dbReference type="HOGENOM" id="CLU_006406_0_1_11"/>
<dbReference type="Proteomes" id="UP000000738">
    <property type="component" value="Chromosome"/>
</dbReference>
<dbReference type="GO" id="GO:0005737">
    <property type="term" value="C:cytoplasm"/>
    <property type="evidence" value="ECO:0007669"/>
    <property type="project" value="UniProtKB-SubCell"/>
</dbReference>
<dbReference type="GO" id="GO:0004814">
    <property type="term" value="F:arginine-tRNA ligase activity"/>
    <property type="evidence" value="ECO:0007669"/>
    <property type="project" value="UniProtKB-UniRule"/>
</dbReference>
<dbReference type="GO" id="GO:0005524">
    <property type="term" value="F:ATP binding"/>
    <property type="evidence" value="ECO:0007669"/>
    <property type="project" value="UniProtKB-UniRule"/>
</dbReference>
<dbReference type="GO" id="GO:0006420">
    <property type="term" value="P:arginyl-tRNA aminoacylation"/>
    <property type="evidence" value="ECO:0007669"/>
    <property type="project" value="UniProtKB-UniRule"/>
</dbReference>
<dbReference type="CDD" id="cd00671">
    <property type="entry name" value="ArgRS_core"/>
    <property type="match status" value="1"/>
</dbReference>
<dbReference type="FunFam" id="1.10.730.10:FF:000008">
    <property type="entry name" value="Arginine--tRNA ligase"/>
    <property type="match status" value="1"/>
</dbReference>
<dbReference type="Gene3D" id="3.30.1360.70">
    <property type="entry name" value="Arginyl tRNA synthetase N-terminal domain"/>
    <property type="match status" value="1"/>
</dbReference>
<dbReference type="Gene3D" id="3.40.50.620">
    <property type="entry name" value="HUPs"/>
    <property type="match status" value="1"/>
</dbReference>
<dbReference type="Gene3D" id="1.10.730.10">
    <property type="entry name" value="Isoleucyl-tRNA Synthetase, Domain 1"/>
    <property type="match status" value="1"/>
</dbReference>
<dbReference type="HAMAP" id="MF_00123">
    <property type="entry name" value="Arg_tRNA_synth"/>
    <property type="match status" value="1"/>
</dbReference>
<dbReference type="InterPro" id="IPR001412">
    <property type="entry name" value="aa-tRNA-synth_I_CS"/>
</dbReference>
<dbReference type="InterPro" id="IPR001278">
    <property type="entry name" value="Arg-tRNA-ligase"/>
</dbReference>
<dbReference type="InterPro" id="IPR005148">
    <property type="entry name" value="Arg-tRNA-synth_N"/>
</dbReference>
<dbReference type="InterPro" id="IPR036695">
    <property type="entry name" value="Arg-tRNA-synth_N_sf"/>
</dbReference>
<dbReference type="InterPro" id="IPR035684">
    <property type="entry name" value="ArgRS_core"/>
</dbReference>
<dbReference type="InterPro" id="IPR008909">
    <property type="entry name" value="DALR_anticod-bd"/>
</dbReference>
<dbReference type="InterPro" id="IPR014729">
    <property type="entry name" value="Rossmann-like_a/b/a_fold"/>
</dbReference>
<dbReference type="InterPro" id="IPR009080">
    <property type="entry name" value="tRNAsynth_Ia_anticodon-bd"/>
</dbReference>
<dbReference type="NCBIfam" id="TIGR00456">
    <property type="entry name" value="argS"/>
    <property type="match status" value="1"/>
</dbReference>
<dbReference type="PANTHER" id="PTHR11956:SF5">
    <property type="entry name" value="ARGININE--TRNA LIGASE, CYTOPLASMIC"/>
    <property type="match status" value="1"/>
</dbReference>
<dbReference type="PANTHER" id="PTHR11956">
    <property type="entry name" value="ARGINYL-TRNA SYNTHETASE"/>
    <property type="match status" value="1"/>
</dbReference>
<dbReference type="Pfam" id="PF03485">
    <property type="entry name" value="Arg_tRNA_synt_N"/>
    <property type="match status" value="1"/>
</dbReference>
<dbReference type="Pfam" id="PF05746">
    <property type="entry name" value="DALR_1"/>
    <property type="match status" value="1"/>
</dbReference>
<dbReference type="Pfam" id="PF00750">
    <property type="entry name" value="tRNA-synt_1d"/>
    <property type="match status" value="1"/>
</dbReference>
<dbReference type="PRINTS" id="PR01038">
    <property type="entry name" value="TRNASYNTHARG"/>
</dbReference>
<dbReference type="SMART" id="SM01016">
    <property type="entry name" value="Arg_tRNA_synt_N"/>
    <property type="match status" value="1"/>
</dbReference>
<dbReference type="SMART" id="SM00836">
    <property type="entry name" value="DALR_1"/>
    <property type="match status" value="1"/>
</dbReference>
<dbReference type="SUPFAM" id="SSF47323">
    <property type="entry name" value="Anticodon-binding domain of a subclass of class I aminoacyl-tRNA synthetases"/>
    <property type="match status" value="1"/>
</dbReference>
<dbReference type="SUPFAM" id="SSF55190">
    <property type="entry name" value="Arginyl-tRNA synthetase (ArgRS), N-terminal 'additional' domain"/>
    <property type="match status" value="1"/>
</dbReference>
<dbReference type="SUPFAM" id="SSF52374">
    <property type="entry name" value="Nucleotidylyl transferase"/>
    <property type="match status" value="1"/>
</dbReference>
<dbReference type="PROSITE" id="PS00178">
    <property type="entry name" value="AA_TRNA_LIGASE_I"/>
    <property type="match status" value="1"/>
</dbReference>
<gene>
    <name evidence="1" type="primary">argS</name>
    <name type="ordered locus">Mlut_08000</name>
</gene>